<sequence>MFLAVLYCLLWSFQISDGHFPRACASSKNLLAKECCPPWMGDGSPCGQLSGRGSCQDILLSSAPSGPQFPFKGVDDRESWPSVFYNRTCQCSGNFMGFNCGNCKFGFGGPNCTEKRVLIRRNIFDLSVSEKNKFFSYLTLAKHTISSVYVIPTGTYGQMNNGSTPMFNDINIYDLFVWMHYYVSRDTLLGGSEIWRDIDFAHEAPGFLPWHRLFLLLWEQEIRELTGDENFTVPYWDWRDAENCDICTDEYLGGRHPENPNLLSPASFFSSWQIICSRSEEYNSHQVLCDGTPEGPLLRNPGNHDKAKTPRLPSSADVEFCLSLTQYESGSMDRTANFSFRNTLEGFASPLTGIADPSQSSMHNALHIFMNGTMSQVQGSANDPIFLLHHAFVDSIFEQWLRRHRPLLEVYPEANAPIGHNRDSYMVPFIPLYRNGDFFITSKDLGYDYSYLQESDPGFYRNYIEPYLEQASRIWPWLLGAALVGAVIAAALSGLSSRLCLQKKKKKKQPQEERQPLLMDKDDYHSLLYQSHL</sequence>
<feature type="signal peptide" evidence="3">
    <location>
        <begin position="1"/>
        <end position="18"/>
    </location>
</feature>
<feature type="chain" id="PRO_0000035880" description="Tyrosinase">
    <location>
        <begin position="19"/>
        <end position="533"/>
    </location>
</feature>
<feature type="topological domain" description="Lumenal, melanosome" evidence="3">
    <location>
        <begin position="19"/>
        <end position="476"/>
    </location>
</feature>
<feature type="transmembrane region" description="Helical" evidence="3">
    <location>
        <begin position="477"/>
        <end position="497"/>
    </location>
</feature>
<feature type="topological domain" description="Cytoplasmic" evidence="3">
    <location>
        <begin position="498"/>
        <end position="533"/>
    </location>
</feature>
<feature type="binding site" evidence="2">
    <location>
        <position position="180"/>
    </location>
    <ligand>
        <name>Cu cation</name>
        <dbReference type="ChEBI" id="CHEBI:23378"/>
        <label>A</label>
    </ligand>
</feature>
<feature type="binding site" evidence="2">
    <location>
        <position position="202"/>
    </location>
    <ligand>
        <name>Cu cation</name>
        <dbReference type="ChEBI" id="CHEBI:23378"/>
        <label>A</label>
    </ligand>
</feature>
<feature type="binding site" evidence="2">
    <location>
        <position position="211"/>
    </location>
    <ligand>
        <name>Cu cation</name>
        <dbReference type="ChEBI" id="CHEBI:23378"/>
        <label>A</label>
    </ligand>
</feature>
<feature type="binding site" evidence="2">
    <location>
        <position position="363"/>
    </location>
    <ligand>
        <name>Cu cation</name>
        <dbReference type="ChEBI" id="CHEBI:23378"/>
        <label>B</label>
    </ligand>
</feature>
<feature type="binding site" evidence="2">
    <location>
        <position position="367"/>
    </location>
    <ligand>
        <name>Cu cation</name>
        <dbReference type="ChEBI" id="CHEBI:23378"/>
        <label>B</label>
    </ligand>
</feature>
<feature type="binding site" evidence="2">
    <location>
        <position position="390"/>
    </location>
    <ligand>
        <name>Cu cation</name>
        <dbReference type="ChEBI" id="CHEBI:23378"/>
        <label>B</label>
    </ligand>
</feature>
<feature type="glycosylation site" description="N-linked (GlcNAc...) asparagine" evidence="3">
    <location>
        <position position="86"/>
    </location>
</feature>
<feature type="glycosylation site" description="N-linked (GlcNAc...) asparagine" evidence="3">
    <location>
        <position position="111"/>
    </location>
</feature>
<feature type="glycosylation site" description="N-linked (GlcNAc...) asparagine" evidence="3">
    <location>
        <position position="161"/>
    </location>
</feature>
<feature type="glycosylation site" description="N-linked (GlcNAc...) asparagine" evidence="3">
    <location>
        <position position="230"/>
    </location>
</feature>
<feature type="glycosylation site" description="N-linked (GlcNAc...) asparagine" evidence="3">
    <location>
        <position position="337"/>
    </location>
</feature>
<feature type="glycosylation site" description="N-linked (GlcNAc...) asparagine" evidence="3">
    <location>
        <position position="371"/>
    </location>
</feature>
<feature type="sequence variant" description="In albino mice." evidence="5 8 12">
    <original>C</original>
    <variation>S</variation>
    <location>
        <position position="103"/>
    </location>
</feature>
<feature type="sequence variant" description="In strain: Himalayan." evidence="10">
    <original>H</original>
    <variation>R</variation>
    <location>
        <position position="420"/>
    </location>
</feature>
<feature type="sequence variant" description="In chinchilla mice." evidence="6">
    <original>A</original>
    <variation>T</variation>
    <location>
        <position position="482"/>
    </location>
</feature>
<feature type="sequence conflict" description="In Ref. 4; AAA37806." evidence="14" ref="4">
    <original>M</original>
    <variation>I</variation>
    <location>
        <position position="40"/>
    </location>
</feature>
<feature type="sequence conflict" description="In Ref. 4; AAA37806." evidence="14" ref="4">
    <original>D</original>
    <variation>Q</variation>
    <location>
        <position position="197"/>
    </location>
</feature>
<feature type="sequence conflict" description="In Ref. 3; CAA31273." evidence="14" ref="3">
    <original>S</original>
    <variation>I</variation>
    <location>
        <position position="264"/>
    </location>
</feature>
<feature type="sequence conflict" description="In Ref. 2; AAA40516." evidence="14" ref="2">
    <original>G</original>
    <variation>V</variation>
    <location>
        <position position="346"/>
    </location>
</feature>
<dbReference type="EC" id="1.14.18.1"/>
<dbReference type="EMBL" id="D00440">
    <property type="protein sequence ID" value="BAA00341.1"/>
    <property type="molecule type" value="mRNA"/>
</dbReference>
<dbReference type="EMBL" id="D00131">
    <property type="protein sequence ID" value="BAA00079.1"/>
    <property type="status" value="ALT_SEQ"/>
    <property type="molecule type" value="mRNA"/>
</dbReference>
<dbReference type="EMBL" id="M20234">
    <property type="protein sequence ID" value="AAA40516.1"/>
    <property type="molecule type" value="mRNA"/>
</dbReference>
<dbReference type="EMBL" id="X12782">
    <property type="protein sequence ID" value="CAA31273.1"/>
    <property type="molecule type" value="mRNA"/>
</dbReference>
<dbReference type="EMBL" id="M26729">
    <property type="protein sequence ID" value="AAA37806.1"/>
    <property type="molecule type" value="mRNA"/>
</dbReference>
<dbReference type="EMBL" id="M24560">
    <property type="protein sequence ID" value="AAA40517.1"/>
    <property type="molecule type" value="mRNA"/>
</dbReference>
<dbReference type="EMBL" id="D00439">
    <property type="protein sequence ID" value="BAA00340.1"/>
    <property type="molecule type" value="Genomic_DNA"/>
</dbReference>
<dbReference type="EMBL" id="X51743">
    <property type="protein sequence ID" value="CAA36033.1"/>
    <property type="molecule type" value="Genomic_DNA"/>
</dbReference>
<dbReference type="CCDS" id="CCDS52304.1"/>
<dbReference type="PIR" id="A27711">
    <property type="entry name" value="YRMSCS"/>
</dbReference>
<dbReference type="RefSeq" id="NP_035791.1">
    <property type="nucleotide sequence ID" value="NM_011661.6"/>
</dbReference>
<dbReference type="SMR" id="P11344"/>
<dbReference type="BioGRID" id="204394">
    <property type="interactions" value="8"/>
</dbReference>
<dbReference type="CORUM" id="P11344"/>
<dbReference type="ELM" id="P11344"/>
<dbReference type="FunCoup" id="P11344">
    <property type="interactions" value="475"/>
</dbReference>
<dbReference type="IntAct" id="P11344">
    <property type="interactions" value="2"/>
</dbReference>
<dbReference type="STRING" id="10090.ENSMUSP00000004770"/>
<dbReference type="BindingDB" id="P11344"/>
<dbReference type="ChEMBL" id="CHEMBL5346"/>
<dbReference type="DrugCentral" id="P11344"/>
<dbReference type="GlyCosmos" id="P11344">
    <property type="glycosylation" value="6 sites, No reported glycans"/>
</dbReference>
<dbReference type="GlyGen" id="P11344">
    <property type="glycosylation" value="6 sites"/>
</dbReference>
<dbReference type="PhosphoSitePlus" id="P11344"/>
<dbReference type="PaxDb" id="10090-ENSMUSP00000004770"/>
<dbReference type="ProteomicsDB" id="298079"/>
<dbReference type="Antibodypedia" id="3663">
    <property type="antibodies" value="911 antibodies from 38 providers"/>
</dbReference>
<dbReference type="DNASU" id="22173"/>
<dbReference type="Ensembl" id="ENSMUST00000004770.7">
    <property type="protein sequence ID" value="ENSMUSP00000004770.6"/>
    <property type="gene ID" value="ENSMUSG00000004651.7"/>
</dbReference>
<dbReference type="GeneID" id="22173"/>
<dbReference type="KEGG" id="mmu:22173"/>
<dbReference type="UCSC" id="uc009ifo.1">
    <property type="organism name" value="mouse"/>
</dbReference>
<dbReference type="AGR" id="MGI:98880"/>
<dbReference type="CTD" id="7299"/>
<dbReference type="MGI" id="MGI:98880">
    <property type="gene designation" value="Tyr"/>
</dbReference>
<dbReference type="VEuPathDB" id="HostDB:ENSMUSG00000004651"/>
<dbReference type="eggNOG" id="ENOG502QRET">
    <property type="taxonomic scope" value="Eukaryota"/>
</dbReference>
<dbReference type="GeneTree" id="ENSGT00940000155336"/>
<dbReference type="HOGENOM" id="CLU_038693_1_0_1"/>
<dbReference type="InParanoid" id="P11344"/>
<dbReference type="OMA" id="PMDKMAN"/>
<dbReference type="OrthoDB" id="6132182at2759"/>
<dbReference type="PhylomeDB" id="P11344"/>
<dbReference type="TreeFam" id="TF315865"/>
<dbReference type="BRENDA" id="1.14.18.1">
    <property type="organism ID" value="3474"/>
</dbReference>
<dbReference type="Reactome" id="R-MMU-5662702">
    <property type="pathway name" value="Melanin biosynthesis"/>
</dbReference>
<dbReference type="BioGRID-ORCS" id="22173">
    <property type="hits" value="3 hits in 77 CRISPR screens"/>
</dbReference>
<dbReference type="ChiTaRS" id="Tyr">
    <property type="organism name" value="mouse"/>
</dbReference>
<dbReference type="PRO" id="PR:P11344"/>
<dbReference type="Proteomes" id="UP000000589">
    <property type="component" value="Chromosome 7"/>
</dbReference>
<dbReference type="RNAct" id="P11344">
    <property type="molecule type" value="protein"/>
</dbReference>
<dbReference type="Bgee" id="ENSMUSG00000004651">
    <property type="expression patterns" value="Expressed in iris and 55 other cell types or tissues"/>
</dbReference>
<dbReference type="ExpressionAtlas" id="P11344">
    <property type="expression patterns" value="baseline and differential"/>
</dbReference>
<dbReference type="GO" id="GO:0042470">
    <property type="term" value="C:melanosome"/>
    <property type="evidence" value="ECO:0000314"/>
    <property type="project" value="UniProtKB"/>
</dbReference>
<dbReference type="GO" id="GO:0033162">
    <property type="term" value="C:melanosome membrane"/>
    <property type="evidence" value="ECO:0007669"/>
    <property type="project" value="UniProtKB-SubCell"/>
</dbReference>
<dbReference type="GO" id="GO:0016020">
    <property type="term" value="C:membrane"/>
    <property type="evidence" value="ECO:0000304"/>
    <property type="project" value="UniProtKB"/>
</dbReference>
<dbReference type="GO" id="GO:0048471">
    <property type="term" value="C:perinuclear region of cytoplasm"/>
    <property type="evidence" value="ECO:0007669"/>
    <property type="project" value="Ensembl"/>
</dbReference>
<dbReference type="GO" id="GO:0005507">
    <property type="term" value="F:copper ion binding"/>
    <property type="evidence" value="ECO:0007669"/>
    <property type="project" value="Ensembl"/>
</dbReference>
<dbReference type="GO" id="GO:0042802">
    <property type="term" value="F:identical protein binding"/>
    <property type="evidence" value="ECO:0000353"/>
    <property type="project" value="MGI"/>
</dbReference>
<dbReference type="GO" id="GO:0042803">
    <property type="term" value="F:protein homodimerization activity"/>
    <property type="evidence" value="ECO:0000314"/>
    <property type="project" value="UniProtKB"/>
</dbReference>
<dbReference type="GO" id="GO:0004503">
    <property type="term" value="F:tyrosinase activity"/>
    <property type="evidence" value="ECO:0000304"/>
    <property type="project" value="UniProtKB"/>
</dbReference>
<dbReference type="GO" id="GO:0008283">
    <property type="term" value="P:cell population proliferation"/>
    <property type="evidence" value="ECO:0000315"/>
    <property type="project" value="MGI"/>
</dbReference>
<dbReference type="GO" id="GO:0042438">
    <property type="term" value="P:melanin biosynthetic process"/>
    <property type="evidence" value="ECO:0000315"/>
    <property type="project" value="MGI"/>
</dbReference>
<dbReference type="GO" id="GO:0043473">
    <property type="term" value="P:pigmentation"/>
    <property type="evidence" value="ECO:0000315"/>
    <property type="project" value="MGI"/>
</dbReference>
<dbReference type="GO" id="GO:0009637">
    <property type="term" value="P:response to blue light"/>
    <property type="evidence" value="ECO:0000250"/>
    <property type="project" value="UniProtKB"/>
</dbReference>
<dbReference type="GO" id="GO:0051591">
    <property type="term" value="P:response to cAMP"/>
    <property type="evidence" value="ECO:0007669"/>
    <property type="project" value="Ensembl"/>
</dbReference>
<dbReference type="GO" id="GO:0009411">
    <property type="term" value="P:response to UV"/>
    <property type="evidence" value="ECO:0007669"/>
    <property type="project" value="Ensembl"/>
</dbReference>
<dbReference type="GO" id="GO:0033280">
    <property type="term" value="P:response to vitamin D"/>
    <property type="evidence" value="ECO:0007669"/>
    <property type="project" value="Ensembl"/>
</dbReference>
<dbReference type="GO" id="GO:0048538">
    <property type="term" value="P:thymus development"/>
    <property type="evidence" value="ECO:0000315"/>
    <property type="project" value="MGI"/>
</dbReference>
<dbReference type="FunFam" id="1.10.1280.10:FF:000003">
    <property type="entry name" value="Tyrosinase"/>
    <property type="match status" value="1"/>
</dbReference>
<dbReference type="Gene3D" id="1.10.1280.10">
    <property type="entry name" value="Di-copper center containing domain from catechol oxidase"/>
    <property type="match status" value="1"/>
</dbReference>
<dbReference type="InterPro" id="IPR008922">
    <property type="entry name" value="Di-copper_centre_dom_sf"/>
</dbReference>
<dbReference type="InterPro" id="IPR050316">
    <property type="entry name" value="Tyrosinase/Hemocyanin"/>
</dbReference>
<dbReference type="InterPro" id="IPR002227">
    <property type="entry name" value="Tyrosinase_Cu-bd"/>
</dbReference>
<dbReference type="PANTHER" id="PTHR11474:SF124">
    <property type="entry name" value="TYROSINASE"/>
    <property type="match status" value="1"/>
</dbReference>
<dbReference type="PANTHER" id="PTHR11474">
    <property type="entry name" value="TYROSINASE FAMILY MEMBER"/>
    <property type="match status" value="1"/>
</dbReference>
<dbReference type="Pfam" id="PF00264">
    <property type="entry name" value="Tyrosinase"/>
    <property type="match status" value="1"/>
</dbReference>
<dbReference type="PRINTS" id="PR00092">
    <property type="entry name" value="TYROSINASE"/>
</dbReference>
<dbReference type="SUPFAM" id="SSF48056">
    <property type="entry name" value="Di-copper centre-containing domain"/>
    <property type="match status" value="1"/>
</dbReference>
<dbReference type="PROSITE" id="PS00497">
    <property type="entry name" value="TYROSINASE_1"/>
    <property type="match status" value="1"/>
</dbReference>
<dbReference type="PROSITE" id="PS00498">
    <property type="entry name" value="TYROSINASE_2"/>
    <property type="match status" value="1"/>
</dbReference>
<keyword id="KW-0015">Albinism</keyword>
<keyword id="KW-0186">Copper</keyword>
<keyword id="KW-0225">Disease variant</keyword>
<keyword id="KW-0325">Glycoprotein</keyword>
<keyword id="KW-0470">Melanin biosynthesis</keyword>
<keyword id="KW-0472">Membrane</keyword>
<keyword id="KW-0479">Metal-binding</keyword>
<keyword id="KW-0503">Monooxygenase</keyword>
<keyword id="KW-0560">Oxidoreductase</keyword>
<keyword id="KW-1185">Reference proteome</keyword>
<keyword id="KW-0732">Signal</keyword>
<keyword id="KW-0812">Transmembrane</keyword>
<keyword id="KW-1133">Transmembrane helix</keyword>
<reference key="1">
    <citation type="journal article" date="1987" name="Jpn. J. Genet.">
        <title>Cloning and sequencing of mouse tyrosinase cDNA.</title>
        <authorList>
            <person name="Yamamoto H."/>
            <person name="Takeuchi S."/>
            <person name="Kudo T."/>
            <person name="Makino K."/>
            <person name="Nakata A."/>
            <person name="Shinoda T."/>
            <person name="Takeuchi T."/>
        </authorList>
    </citation>
    <scope>NUCLEOTIDE SEQUENCE [MRNA]</scope>
    <source>
        <strain>C57BL/6J</strain>
    </source>
</reference>
<reference key="2">
    <citation type="journal article" date="1988" name="Biochem. Biophys. Res. Commun.">
        <title>Sequence analysis of mouse tyrosinase cDNA and the effect of melanotropin on its gene expression.</title>
        <authorList>
            <person name="Kwon B.S."/>
            <person name="Wakulchik M."/>
            <person name="Haq A.K."/>
            <person name="Halaban R."/>
            <person name="Kestler D."/>
        </authorList>
    </citation>
    <scope>NUCLEOTIDE SEQUENCE [MRNA]</scope>
    <scope>VARIANT SER-103</scope>
    <source>
        <strain>DBA/2J</strain>
    </source>
</reference>
<reference key="3">
    <citation type="journal article" date="1988" name="EMBO J.">
        <title>Functional analysis of alternatively spliced tyrosinase gene transcripts.</title>
        <authorList>
            <person name="Mueller G."/>
            <person name="Ruppert S."/>
            <person name="Schmid E."/>
            <person name="Schuetz G."/>
        </authorList>
    </citation>
    <scope>NUCLEOTIDE SEQUENCE [MRNA]</scope>
    <scope>FUNCTION</scope>
</reference>
<reference key="4">
    <citation type="journal article" date="1989" name="Biochem. Biophys. Res. Commun.">
        <title>Molecular basis of mouse Himalayan mutation.</title>
        <authorList>
            <person name="Kwon B.S."/>
            <person name="Halaban R."/>
            <person name="Chintamaneni C."/>
        </authorList>
    </citation>
    <scope>NUCLEOTIDE SEQUENCE [MRNA]</scope>
    <scope>VARIANT ARG-420</scope>
    <source>
        <strain>Himalayan</strain>
    </source>
</reference>
<reference key="5">
    <citation type="journal article" date="1989" name="Biochem. Biophys. Res. Commun.">
        <title>Isolation and characterization of variant cDNAs encoding mouse tyrosinase.</title>
        <authorList>
            <person name="Terao M."/>
            <person name="Tabe L."/>
            <person name="Garattini E."/>
            <person name="Sartori D."/>
            <person name="Studer M."/>
            <person name="Mintz B."/>
        </authorList>
    </citation>
    <scope>NUCLEOTIDE SEQUENCE [MRNA]</scope>
    <scope>TISSUE SPECIFICITY</scope>
</reference>
<reference key="6">
    <citation type="journal article" date="1989" name="Jpn. J. Genet.">
        <title>Melanin production in cultured albino melanocytes transfected with mouse tyrosinase cDNA.</title>
        <authorList>
            <person name="Yamamoto H."/>
            <person name="Takeuchi S."/>
            <person name="Kudo T."/>
            <person name="Sato C."/>
            <person name="Takeuchi T."/>
        </authorList>
    </citation>
    <scope>NUCLEOTIDE SEQUENCE [GENOMIC DNA] OF 1-273</scope>
    <scope>FUNCTION</scope>
</reference>
<reference key="7">
    <citation type="journal article" date="1989" name="J. Invest. Dermatol.">
        <title>Isolation, chromosomal mapping, and expression of the mouse tyrosinase gene.</title>
        <authorList>
            <person name="Kwon B.S."/>
            <person name="Haq A.K."/>
            <person name="Wakulchik M."/>
            <person name="Kestler D."/>
            <person name="Barton D.E."/>
            <person name="Francke U."/>
            <person name="Lamoreux M.L."/>
            <person name="Whitney J.B. III"/>
            <person name="Halaban R."/>
        </authorList>
    </citation>
    <scope>NUCLEOTIDE SEQUENCE OF 1-273</scope>
    <scope>VARIANT ALBINO SER-103</scope>
    <source>
        <strain>BALB/cJ</strain>
    </source>
</reference>
<reference key="8">
    <citation type="journal article" date="1990" name="Eur. J. Biochem.">
        <title>A point mutation in the tyrosinase gene of BALB/c albino mouse causing the cysteine--&gt;serine substitution at position 85.</title>
        <authorList>
            <person name="Shibahara S."/>
            <person name="Okinaga S."/>
            <person name="Tomita Y."/>
            <person name="Takeda A."/>
            <person name="Yamamoto H."/>
            <person name="Sato M."/>
            <person name="Takeuchi T."/>
        </authorList>
    </citation>
    <scope>NUCLEOTIDE SEQUENCE [GENOMIC DNA] OF 1-13</scope>
    <scope>VARIANT ALBINO SER-103</scope>
    <source>
        <strain>BALB/cJ</strain>
    </source>
</reference>
<reference key="9">
    <citation type="journal article" date="1992" name="EMBO J.">
        <title>A second tyrosinase-related protein, TRP-2, is a melanogenic enzyme termed DOPAchrome tautomerase.</title>
        <authorList>
            <person name="Tsukamoto K."/>
            <person name="Jackson I.J."/>
            <person name="Urabe K."/>
            <person name="Montague P.M."/>
            <person name="Hearing V.J."/>
        </authorList>
    </citation>
    <scope>FUNCTION</scope>
    <scope>CATALYTIC ACTIVITY</scope>
    <scope>GLYCOSYLATION</scope>
</reference>
<reference key="10">
    <citation type="journal article" date="2016" name="J. Biol. Chem.">
        <title>RUTBC1 functions as a GTPase-activating protein for Rab32/38 and regulates melanogenic enzyme trafficking in melanocytes.</title>
        <authorList>
            <person name="Marubashi S."/>
            <person name="Shimada H."/>
            <person name="Fukuda M."/>
            <person name="Ohbayashi N."/>
        </authorList>
    </citation>
    <scope>SUBCELLULAR LOCATION</scope>
</reference>
<reference key="11">
    <citation type="journal article" date="2022" name="J. Invest. Dermatol.">
        <title>Ablation of H+/glucose Exporter SLC45A2 Enhances Melanosomal Glycolysis to Inhibit Melanin Biosynthesis and Promote Melanoma Metastasis.</title>
        <authorList>
            <person name="Liu Y."/>
            <person name="Chi W."/>
            <person name="Tao L."/>
            <person name="Wang G."/>
            <person name="Deepak R.N.V.K."/>
            <person name="Sheng L."/>
            <person name="Chen T."/>
            <person name="Feng Y."/>
            <person name="Cao X."/>
            <person name="Cheng L."/>
            <person name="Zhao X."/>
            <person name="Liu X."/>
            <person name="Deng H."/>
            <person name="Fan H."/>
            <person name="Jiang P."/>
            <person name="Chen L."/>
        </authorList>
    </citation>
    <scope>FUNCTION</scope>
</reference>
<reference key="12">
    <citation type="journal article" date="1990" name="EMBO J.">
        <title>Rescue of the albino phenotype by introduction of a functional tyrosinase gene into mice.</title>
        <authorList>
            <person name="Beermann F."/>
            <person name="Ruppert S."/>
            <person name="Hummler E."/>
            <person name="Bosch F.X."/>
            <person name="Mueller G."/>
            <person name="Ruether U."/>
            <person name="Schuetz G."/>
        </authorList>
    </citation>
    <scope>VARIANT CHINCHILLA MICE THR-482</scope>
</reference>
<proteinExistence type="evidence at protein level"/>
<comment type="function">
    <text evidence="4 9 13">This is a copper-containing oxidase that functions in the formation of pigments such as melanins and other polyphenolic compounds (PubMed:2517217). Catalyzes the initial and rate limiting step in the cascade of reactions leading to melanin production from tyrosine (PubMed:1537333, PubMed:2517217, PubMed:35469906). In addition to hydroxylating tyrosine to DOPA (3,4-dihydroxyphenylalanine), also catalyzes the oxidation of DOPA to DOPA-quinone, and possibly the oxidation of DHI (5,6-dihydroxyindole) to indole-5,6 quinone (PubMed:1537333).</text>
</comment>
<comment type="catalytic activity">
    <reaction evidence="4">
        <text>2 L-dopa + O2 = 2 L-dopaquinone + 2 H2O</text>
        <dbReference type="Rhea" id="RHEA:34287"/>
        <dbReference type="ChEBI" id="CHEBI:15377"/>
        <dbReference type="ChEBI" id="CHEBI:15379"/>
        <dbReference type="ChEBI" id="CHEBI:57504"/>
        <dbReference type="ChEBI" id="CHEBI:57924"/>
        <dbReference type="EC" id="1.14.18.1"/>
    </reaction>
</comment>
<comment type="catalytic activity">
    <reaction evidence="4">
        <text>L-tyrosine + O2 = L-dopaquinone + H2O</text>
        <dbReference type="Rhea" id="RHEA:18117"/>
        <dbReference type="ChEBI" id="CHEBI:15377"/>
        <dbReference type="ChEBI" id="CHEBI:15379"/>
        <dbReference type="ChEBI" id="CHEBI:57924"/>
        <dbReference type="ChEBI" id="CHEBI:58315"/>
        <dbReference type="EC" id="1.14.18.1"/>
    </reaction>
</comment>
<comment type="catalytic activity">
    <reaction evidence="1">
        <text>2 5,6-dihydroxyindole-2-carboxylate + O2 = 2 indole-5,6-quinone-2-carboxylate + 2 H2O</text>
        <dbReference type="Rhea" id="RHEA:68388"/>
        <dbReference type="ChEBI" id="CHEBI:15377"/>
        <dbReference type="ChEBI" id="CHEBI:15379"/>
        <dbReference type="ChEBI" id="CHEBI:16875"/>
        <dbReference type="ChEBI" id="CHEBI:177869"/>
    </reaction>
    <physiologicalReaction direction="left-to-right" evidence="1">
        <dbReference type="Rhea" id="RHEA:68389"/>
    </physiologicalReaction>
</comment>
<comment type="cofactor">
    <cofactor evidence="2">
        <name>Cu(2+)</name>
        <dbReference type="ChEBI" id="CHEBI:29036"/>
    </cofactor>
    <text evidence="2">Binds 2 copper ions per subunit.</text>
</comment>
<comment type="subunit">
    <text evidence="1">Forms an OPN3-dependent complex with DCT in response to blue light in melanocytes.</text>
</comment>
<comment type="interaction">
    <interactant intactId="EBI-821603">
        <id>P11344</id>
    </interactant>
    <interactant intactId="EBI-821614">
        <id>P07147</id>
        <label>Tyrp1</label>
    </interactant>
    <organismsDiffer>false</organismsDiffer>
    <experiments>8</experiments>
</comment>
<comment type="subcellular location">
    <subcellularLocation>
        <location evidence="1">Melanosome membrane</location>
        <topology evidence="1">Single-pass type I membrane protein</topology>
    </subcellularLocation>
    <subcellularLocation>
        <location evidence="11">Melanosome</location>
    </subcellularLocation>
    <text evidence="11">Proper trafficking to melanosome is regulated by SGSM2, ANKRD27, RAB9A, RAB32 and RAB38.</text>
</comment>
<comment type="tissue specificity">
    <text evidence="7">Expressed in the skin.</text>
</comment>
<comment type="PTM">
    <text evidence="4">Glycosylated.</text>
</comment>
<comment type="disease">
    <text evidence="5 6 8 10">Defects in Tyr result in various forms of albinism. Himalayan strain tyrosinase is temperature-sensitive.</text>
</comment>
<comment type="similarity">
    <text evidence="14">Belongs to the tyrosinase family.</text>
</comment>
<comment type="sequence caution" evidence="14">
    <conflict type="miscellaneous discrepancy">
        <sequence resource="EMBL-CDS" id="BAA00079"/>
    </conflict>
</comment>
<comment type="online information" name="Protein Spotlight">
    <link uri="https://www.proteinspotlight.org/back_issues/049"/>
    <text>Snowy stardom - Issue 49 of August 2004</text>
</comment>
<accession>P11344</accession>
<protein>
    <recommendedName>
        <fullName>Tyrosinase</fullName>
        <ecNumber>1.14.18.1</ecNumber>
    </recommendedName>
    <alternativeName>
        <fullName>Albino locus protein</fullName>
    </alternativeName>
    <alternativeName>
        <fullName>Monophenol monooxygenase</fullName>
    </alternativeName>
</protein>
<evidence type="ECO:0000250" key="1">
    <source>
        <dbReference type="UniProtKB" id="P14679"/>
    </source>
</evidence>
<evidence type="ECO:0000250" key="2">
    <source>
        <dbReference type="UniProtKB" id="Q9ZP19"/>
    </source>
</evidence>
<evidence type="ECO:0000255" key="3"/>
<evidence type="ECO:0000269" key="4">
    <source>
    </source>
</evidence>
<evidence type="ECO:0000269" key="5">
    <source>
    </source>
</evidence>
<evidence type="ECO:0000269" key="6">
    <source>
    </source>
</evidence>
<evidence type="ECO:0000269" key="7">
    <source>
    </source>
</evidence>
<evidence type="ECO:0000269" key="8">
    <source>
    </source>
</evidence>
<evidence type="ECO:0000269" key="9">
    <source>
    </source>
</evidence>
<evidence type="ECO:0000269" key="10">
    <source>
    </source>
</evidence>
<evidence type="ECO:0000269" key="11">
    <source>
    </source>
</evidence>
<evidence type="ECO:0000269" key="12">
    <source>
    </source>
</evidence>
<evidence type="ECO:0000269" key="13">
    <source>
    </source>
</evidence>
<evidence type="ECO:0000305" key="14"/>
<organism>
    <name type="scientific">Mus musculus</name>
    <name type="common">Mouse</name>
    <dbReference type="NCBI Taxonomy" id="10090"/>
    <lineage>
        <taxon>Eukaryota</taxon>
        <taxon>Metazoa</taxon>
        <taxon>Chordata</taxon>
        <taxon>Craniata</taxon>
        <taxon>Vertebrata</taxon>
        <taxon>Euteleostomi</taxon>
        <taxon>Mammalia</taxon>
        <taxon>Eutheria</taxon>
        <taxon>Euarchontoglires</taxon>
        <taxon>Glires</taxon>
        <taxon>Rodentia</taxon>
        <taxon>Myomorpha</taxon>
        <taxon>Muroidea</taxon>
        <taxon>Muridae</taxon>
        <taxon>Murinae</taxon>
        <taxon>Mus</taxon>
        <taxon>Mus</taxon>
    </lineage>
</organism>
<name>TYRO_MOUSE</name>
<gene>
    <name type="primary">Tyr</name>
</gene>